<keyword id="KW-0001">2Fe-2S</keyword>
<keyword id="KW-0963">Cytoplasm</keyword>
<keyword id="KW-0249">Electron transport</keyword>
<keyword id="KW-0274">FAD</keyword>
<keyword id="KW-0285">Flavoprotein</keyword>
<keyword id="KW-0408">Iron</keyword>
<keyword id="KW-0411">Iron-sulfur</keyword>
<keyword id="KW-0472">Membrane</keyword>
<keyword id="KW-0479">Metal-binding</keyword>
<keyword id="KW-0484">Methanogenesis</keyword>
<keyword id="KW-0485">Methanol utilization</keyword>
<keyword id="KW-0560">Oxidoreductase</keyword>
<keyword id="KW-0677">Repeat</keyword>
<keyword id="KW-0813">Transport</keyword>
<gene>
    <name type="primary">fpoF</name>
    <name type="ordered locus">MM_0627</name>
</gene>
<proteinExistence type="evidence at protein level"/>
<accession>Q8PZ67</accession>
<accession>Q9P9F1</accession>
<evidence type="ECO:0000255" key="1"/>
<evidence type="ECO:0000255" key="2">
    <source>
        <dbReference type="PROSITE-ProRule" id="PRU00711"/>
    </source>
</evidence>
<evidence type="ECO:0000269" key="3">
    <source>
    </source>
</evidence>
<evidence type="ECO:0000269" key="4">
    <source>
    </source>
</evidence>
<evidence type="ECO:0000269" key="5">
    <source ref="1"/>
</evidence>
<evidence type="ECO:0000305" key="6"/>
<feature type="chain" id="PRO_0000423960" description="F(420)H(2) dehydrogenase subunit F">
    <location>
        <begin position="1"/>
        <end position="346"/>
    </location>
</feature>
<feature type="domain" description="4Fe-4S ferredoxin-type 1" evidence="2">
    <location>
        <begin position="5"/>
        <end position="34"/>
    </location>
</feature>
<feature type="domain" description="4Fe-4S ferredoxin-type 2" evidence="2">
    <location>
        <begin position="46"/>
        <end position="76"/>
    </location>
</feature>
<feature type="binding site" evidence="1">
    <location>
        <position position="14"/>
    </location>
    <ligand>
        <name>[4Fe-4S] cluster</name>
        <dbReference type="ChEBI" id="CHEBI:49883"/>
        <label>1</label>
    </ligand>
</feature>
<feature type="binding site" evidence="1">
    <location>
        <position position="17"/>
    </location>
    <ligand>
        <name>[4Fe-4S] cluster</name>
        <dbReference type="ChEBI" id="CHEBI:49883"/>
        <label>1</label>
    </ligand>
</feature>
<feature type="binding site" evidence="1">
    <location>
        <position position="20"/>
    </location>
    <ligand>
        <name>[4Fe-4S] cluster</name>
        <dbReference type="ChEBI" id="CHEBI:49883"/>
        <label>1</label>
    </ligand>
</feature>
<feature type="binding site" evidence="1">
    <location>
        <position position="24"/>
    </location>
    <ligand>
        <name>[4Fe-4S] cluster</name>
        <dbReference type="ChEBI" id="CHEBI:49883"/>
        <label>1</label>
    </ligand>
</feature>
<feature type="binding site" evidence="1">
    <location>
        <position position="55"/>
    </location>
    <ligand>
        <name>[4Fe-4S] cluster</name>
        <dbReference type="ChEBI" id="CHEBI:49883"/>
        <label>2</label>
    </ligand>
</feature>
<feature type="binding site" evidence="1">
    <location>
        <position position="58"/>
    </location>
    <ligand>
        <name>[4Fe-4S] cluster</name>
        <dbReference type="ChEBI" id="CHEBI:49883"/>
        <label>2</label>
    </ligand>
</feature>
<feature type="binding site" evidence="1">
    <location>
        <position position="61"/>
    </location>
    <ligand>
        <name>[4Fe-4S] cluster</name>
        <dbReference type="ChEBI" id="CHEBI:49883"/>
        <label>2</label>
    </ligand>
</feature>
<feature type="binding site" evidence="1">
    <location>
        <position position="65"/>
    </location>
    <ligand>
        <name>[4Fe-4S] cluster</name>
        <dbReference type="ChEBI" id="CHEBI:49883"/>
        <label>2</label>
    </ligand>
</feature>
<feature type="sequence conflict" description="In Ref. 2; AAF65743." evidence="6" ref="2">
    <original>A</original>
    <variation>E</variation>
    <location>
        <position position="251"/>
    </location>
</feature>
<feature type="sequence conflict" description="In Ref. 2; AAF65743." evidence="6" ref="2">
    <original>C</original>
    <variation>S</variation>
    <location>
        <position position="255"/>
    </location>
</feature>
<reference key="1">
    <citation type="journal article" date="1997" name="FEMS Microbiol. Lett.">
        <title>Purification and properties of an F420H2 dehydrogenase from Methanosarcina mazei Go1.</title>
        <authorList>
            <person name="Abken H.-J."/>
            <person name="Deppenmeier U."/>
        </authorList>
    </citation>
    <scope>NUCLEOTIDE SEQUENCE [GENOMIC DNA]</scope>
    <scope>FUNCTION</scope>
    <scope>CATALYTIC ACTIVITY</scope>
    <scope>BIOPHYSICOCHEMICAL PROPERTIES</scope>
    <scope>SUBSTRATE SPECIFICITY</scope>
    <source>
        <strain>ATCC BAA-159 / DSM 3647 / Goe1 / Go1 / JCM 11833 / OCM 88</strain>
    </source>
</reference>
<reference key="2">
    <citation type="journal article" date="2000" name="J. Biol. Chem.">
        <title>The F420H2 dehydrogenase from Methanosarcina mazei is a Redox-driven proton pump closely related to NADH dehydrogenases.</title>
        <authorList>
            <person name="Baumer S."/>
            <person name="Ide T."/>
            <person name="Jacobi C."/>
            <person name="Johann A."/>
            <person name="Gottschalk G."/>
            <person name="Deppenmeier U."/>
        </authorList>
    </citation>
    <scope>NUCLEOTIDE SEQUENCE [GENOMIC DNA]</scope>
    <scope>FUNCTION IN THE PROTON TRANSLOCATION</scope>
    <scope>SUBUNIT</scope>
    <scope>COFACTOR</scope>
    <scope>NOMENCLATURE</scope>
    <source>
        <strain>ATCC BAA-159 / DSM 3647 / Goe1 / Go1 / JCM 11833 / OCM 88</strain>
    </source>
</reference>
<reference key="3">
    <citation type="journal article" date="2002" name="J. Mol. Microbiol. Biotechnol.">
        <title>The genome of Methanosarcina mazei: evidence for lateral gene transfer between Bacteria and Archaea.</title>
        <authorList>
            <person name="Deppenmeier U."/>
            <person name="Johann A."/>
            <person name="Hartsch T."/>
            <person name="Merkl R."/>
            <person name="Schmitz R.A."/>
            <person name="Martinez-Arias R."/>
            <person name="Henne A."/>
            <person name="Wiezer A."/>
            <person name="Baeumer S."/>
            <person name="Jacobi C."/>
            <person name="Brueggemann H."/>
            <person name="Lienard T."/>
            <person name="Christmann A."/>
            <person name="Boemecke M."/>
            <person name="Steckel S."/>
            <person name="Bhattacharyya A."/>
            <person name="Lykidis A."/>
            <person name="Overbeek R."/>
            <person name="Klenk H.-P."/>
            <person name="Gunsalus R.P."/>
            <person name="Fritz H.-J."/>
            <person name="Gottschalk G."/>
        </authorList>
    </citation>
    <scope>NUCLEOTIDE SEQUENCE [LARGE SCALE GENOMIC DNA]</scope>
    <source>
        <strain>ATCC BAA-159 / DSM 3647 / Goe1 / Go1 / JCM 11833 / OCM 88</strain>
    </source>
</reference>
<reference key="4">
    <citation type="journal article" date="2011" name="FEBS J.">
        <title>Re-evaluation of the function of the F420 dehydrogenase in electron transport of Methanosarcina mazei.</title>
        <authorList>
            <person name="Welte C."/>
            <person name="Deppenmeier U."/>
        </authorList>
    </citation>
    <scope>FUNCTION</scope>
    <scope>CATALYTIC ACTIVITY</scope>
    <scope>BIOPHYSICOCHEMICAL PROPERTIES</scope>
    <scope>COFACTOR</scope>
    <scope>SUBCELLULAR LOCATION</scope>
</reference>
<sequence>MPPKIAEVIQHDVCAACGACEAVCPIGAVTVKKAAEIRDPNDLSLYEKGAAFQVCEGCLTCSRICPVVDGFIENELLNVRKFFGAKSKDNAGSQDGGVTSGILKALFNKGEIDCAVGITRNENWEPEVVLLTSAEDVERTRGTKYTSDPVVAALREAFEKYDRIAVVGVPCQAHAARLIRENVNEKIVLIIGLLCMESFHHDVMLDKIIPEIMKVNVRDIVKMEFTKGKFWVYTKDGEVHSVPIKDIAKYARNPCHHCCDYTSVFADISVGSVGAPDGWNSVFIRTEIGEKYFDMVRDEMEIMEDPKPGLELVGKLIEMKRKGNAEHFQEVCKEFSFETGIRSETV</sequence>
<name>FPOF_METMA</name>
<organism>
    <name type="scientific">Methanosarcina mazei (strain ATCC BAA-159 / DSM 3647 / Goe1 / Go1 / JCM 11833 / OCM 88)</name>
    <name type="common">Methanosarcina frisia</name>
    <dbReference type="NCBI Taxonomy" id="192952"/>
    <lineage>
        <taxon>Archaea</taxon>
        <taxon>Methanobacteriati</taxon>
        <taxon>Methanobacteriota</taxon>
        <taxon>Stenosarchaea group</taxon>
        <taxon>Methanomicrobia</taxon>
        <taxon>Methanosarcinales</taxon>
        <taxon>Methanosarcinaceae</taxon>
        <taxon>Methanosarcina</taxon>
    </lineage>
</organism>
<comment type="function">
    <text evidence="3 4 5">Component of the F(420)H(2) dehydrogenase (FPO complex) which is part of the energy-conserving F(420)H(2):heterodisulfide oxidoreductase system. The membrane-bound electron transfer system of the complex plays an important role in the metabolism of methylotrophic methanogens when the organisms grow on methanol or methylamines. Catalyzes the oxidation of methanophenazine to dihydromethanophenazine. It shuttles electrons from F(420)H(2), via FAD and iron-sulfur (Fe-S) centers, to methanophenazine (an electron carrier in the membrane). It couples the redox reaction to proton translocation (for every two electrons transferred, two hydrogen ions are translocated across the cytoplasmic membrane), and thus conserves the redox energy in a proton gradient. It also catalyzes the oxidation of F(420)H(2) with quinones such as 2,3-dimethyl-1,4-naphthoquinone, 2-methyl-1,4-naphthoquinone and tetramethyl-p-benzoquinone. Might have a dual function, acting as an electron input module when connected to the membrane integral Fpo complex, or as a soluble single subunit, being involved in the reoxydation of reduced ferredoxin in the cytoplasm (PubMed:21306561).</text>
</comment>
<comment type="catalytic activity">
    <reaction evidence="5">
        <text>methanophenazine + reduced coenzyme F420-(gamma-L-Glu)(n) = dihydromethanophenazine + oxidized coenzyme F420-(gamma-L-Glu)(n) + H(+)</text>
        <dbReference type="Rhea" id="RHEA:54752"/>
        <dbReference type="Rhea" id="RHEA-COMP:12939"/>
        <dbReference type="Rhea" id="RHEA-COMP:14378"/>
        <dbReference type="ChEBI" id="CHEBI:15378"/>
        <dbReference type="ChEBI" id="CHEBI:29118"/>
        <dbReference type="ChEBI" id="CHEBI:50375"/>
        <dbReference type="ChEBI" id="CHEBI:133980"/>
        <dbReference type="ChEBI" id="CHEBI:139511"/>
        <dbReference type="EC" id="1.5.98.3"/>
    </reaction>
</comment>
<comment type="catalytic activity">
    <reaction evidence="4">
        <text>reduced coenzyme F420-(gamma-L-Glu)(n) + 2 oxidized [2Fe-2S]-[ferredoxin] = oxidized coenzyme F420-(gamma-L-Glu)(n) + 2 reduced [2Fe-2S]-[ferredoxin] + 3 H(+)</text>
        <dbReference type="Rhea" id="RHEA:42324"/>
        <dbReference type="Rhea" id="RHEA-COMP:10000"/>
        <dbReference type="Rhea" id="RHEA-COMP:10001"/>
        <dbReference type="Rhea" id="RHEA-COMP:12939"/>
        <dbReference type="Rhea" id="RHEA-COMP:14378"/>
        <dbReference type="ChEBI" id="CHEBI:15378"/>
        <dbReference type="ChEBI" id="CHEBI:33737"/>
        <dbReference type="ChEBI" id="CHEBI:33738"/>
        <dbReference type="ChEBI" id="CHEBI:133980"/>
        <dbReference type="ChEBI" id="CHEBI:139511"/>
        <dbReference type="EC" id="1.5.7.2"/>
    </reaction>
</comment>
<comment type="cofactor">
    <cofactor evidence="4">
        <name>[4Fe-4S] cluster</name>
        <dbReference type="ChEBI" id="CHEBI:49883"/>
    </cofactor>
    <text evidence="4">Binds 2 [4Fe-4S] cluster.</text>
</comment>
<comment type="cofactor">
    <cofactor evidence="4">
        <name>FAD</name>
        <dbReference type="ChEBI" id="CHEBI:57692"/>
    </cofactor>
</comment>
<comment type="biophysicochemical properties">
    <kinetics>
        <KM evidence="5">7 uM for F(420)H(2) (at 37 degrees Celsius and pH 7)</KM>
        <KM evidence="4">2 uM for oxidized F(420)</KM>
        <KM evidence="4">0.5 uM for reduced ferredoxin</KM>
        <Vmax evidence="5">17.0 umol/min/mg enzyme (at 37 degrees Celsius and pH 7)</Vmax>
        <Vmax evidence="4">0.225 umol/min/mg enzyme with ferredoxin as substrate</Vmax>
        <text>Measured for the whole complex.</text>
    </kinetics>
    <phDependence>
        <text evidence="5">Optimum pH is 8.5.</text>
    </phDependence>
    <temperatureDependence>
        <text evidence="5">Optimum temperature is 39 degrees Celsius.</text>
    </temperatureDependence>
</comment>
<comment type="subunit">
    <text evidence="3">The FPO complex is composed of at least 13 different subunits.</text>
</comment>
<comment type="subcellular location">
    <subcellularLocation>
        <location>Membrane</location>
        <topology evidence="4">Peripheral membrane protein</topology>
    </subcellularLocation>
    <subcellularLocation>
        <location evidence="4">Cytoplasm</location>
    </subcellularLocation>
</comment>
<dbReference type="EC" id="1.5.7.2" evidence="4"/>
<dbReference type="EC" id="1.5.98.3" evidence="5"/>
<dbReference type="EMBL" id="AF228526">
    <property type="protein sequence ID" value="AAF65743.1"/>
    <property type="molecule type" value="Genomic_DNA"/>
</dbReference>
<dbReference type="EMBL" id="AE008384">
    <property type="protein sequence ID" value="AAM30323.1"/>
    <property type="molecule type" value="Genomic_DNA"/>
</dbReference>
<dbReference type="RefSeq" id="WP_011032578.1">
    <property type="nucleotide sequence ID" value="NC_003901.1"/>
</dbReference>
<dbReference type="SMR" id="Q8PZ67"/>
<dbReference type="TCDB" id="3.D.9.1.1">
    <property type="family name" value="the h(+)-translocating f420h2 dehydrogenase (f420h2dh) family"/>
</dbReference>
<dbReference type="GeneID" id="44086160"/>
<dbReference type="KEGG" id="mma:MM_0627"/>
<dbReference type="PATRIC" id="fig|192952.21.peg.739"/>
<dbReference type="eggNOG" id="arCOG02650">
    <property type="taxonomic scope" value="Archaea"/>
</dbReference>
<dbReference type="HOGENOM" id="CLU_037958_0_0_2"/>
<dbReference type="BioCyc" id="MetaCyc:MONOMER-12227"/>
<dbReference type="BRENDA" id="1.12.98.3">
    <property type="organism ID" value="3270"/>
</dbReference>
<dbReference type="BRENDA" id="1.5.7.2">
    <property type="organism ID" value="3270"/>
</dbReference>
<dbReference type="Proteomes" id="UP000000595">
    <property type="component" value="Chromosome"/>
</dbReference>
<dbReference type="GO" id="GO:0005737">
    <property type="term" value="C:cytoplasm"/>
    <property type="evidence" value="ECO:0007669"/>
    <property type="project" value="UniProtKB-SubCell"/>
</dbReference>
<dbReference type="GO" id="GO:0016020">
    <property type="term" value="C:membrane"/>
    <property type="evidence" value="ECO:0007669"/>
    <property type="project" value="UniProtKB-SubCell"/>
</dbReference>
<dbReference type="GO" id="GO:0051537">
    <property type="term" value="F:2 iron, 2 sulfur cluster binding"/>
    <property type="evidence" value="ECO:0007669"/>
    <property type="project" value="UniProtKB-KW"/>
</dbReference>
<dbReference type="GO" id="GO:0046872">
    <property type="term" value="F:metal ion binding"/>
    <property type="evidence" value="ECO:0007669"/>
    <property type="project" value="UniProtKB-KW"/>
</dbReference>
<dbReference type="GO" id="GO:0051911">
    <property type="term" value="F:Methanosarcina-phenazine hydrogenase activity"/>
    <property type="evidence" value="ECO:0007669"/>
    <property type="project" value="UniProtKB-EC"/>
</dbReference>
<dbReference type="GO" id="GO:0052592">
    <property type="term" value="F:oxidoreductase activity, acting on CH or CH2 groups, with an iron-sulfur protein as acceptor"/>
    <property type="evidence" value="ECO:0007669"/>
    <property type="project" value="TreeGrafter"/>
</dbReference>
<dbReference type="GO" id="GO:0043738">
    <property type="term" value="F:reduced coenzyme F420 dehydrogenase activity"/>
    <property type="evidence" value="ECO:0007669"/>
    <property type="project" value="RHEA"/>
</dbReference>
<dbReference type="GO" id="GO:0015948">
    <property type="term" value="P:methanogenesis"/>
    <property type="evidence" value="ECO:0007669"/>
    <property type="project" value="UniProtKB-KW"/>
</dbReference>
<dbReference type="GO" id="GO:0015945">
    <property type="term" value="P:methanol metabolic process"/>
    <property type="evidence" value="ECO:0007669"/>
    <property type="project" value="UniProtKB-KW"/>
</dbReference>
<dbReference type="Gene3D" id="3.10.450.750">
    <property type="match status" value="1"/>
</dbReference>
<dbReference type="Gene3D" id="3.30.70.20">
    <property type="match status" value="1"/>
</dbReference>
<dbReference type="InterPro" id="IPR017896">
    <property type="entry name" value="4Fe4S_Fe-S-bd"/>
</dbReference>
<dbReference type="InterPro" id="IPR017900">
    <property type="entry name" value="4Fe4S_Fe_S_CS"/>
</dbReference>
<dbReference type="InterPro" id="IPR007516">
    <property type="entry name" value="Co_F420_Hydgase/DH_bsu_N"/>
</dbReference>
<dbReference type="InterPro" id="IPR054922">
    <property type="entry name" value="FPO_su_F"/>
</dbReference>
<dbReference type="InterPro" id="IPR045220">
    <property type="entry name" value="FRHB/FDHB/HCAR-like"/>
</dbReference>
<dbReference type="InterPro" id="IPR007525">
    <property type="entry name" value="FrhB_FdhB_C"/>
</dbReference>
<dbReference type="NCBIfam" id="NF040616">
    <property type="entry name" value="F420_dehyd_FpoF"/>
    <property type="match status" value="1"/>
</dbReference>
<dbReference type="NCBIfam" id="NF006808">
    <property type="entry name" value="PRK09326.1"/>
    <property type="match status" value="1"/>
</dbReference>
<dbReference type="PANTHER" id="PTHR31332">
    <property type="entry name" value="7-HYDROXYMETHYL CHLOROPHYLL A REDUCTASE, CHLOROPLASTIC"/>
    <property type="match status" value="1"/>
</dbReference>
<dbReference type="PANTHER" id="PTHR31332:SF6">
    <property type="entry name" value="FORMATE DEHYDROGENASE SUBUNIT BETA"/>
    <property type="match status" value="1"/>
</dbReference>
<dbReference type="Pfam" id="PF04432">
    <property type="entry name" value="FrhB_FdhB_C"/>
    <property type="match status" value="1"/>
</dbReference>
<dbReference type="Pfam" id="PF04422">
    <property type="entry name" value="FrhB_FdhB_N"/>
    <property type="match status" value="1"/>
</dbReference>
<dbReference type="SUPFAM" id="SSF54862">
    <property type="entry name" value="4Fe-4S ferredoxins"/>
    <property type="match status" value="1"/>
</dbReference>
<dbReference type="PROSITE" id="PS00198">
    <property type="entry name" value="4FE4S_FER_1"/>
    <property type="match status" value="2"/>
</dbReference>
<dbReference type="PROSITE" id="PS51379">
    <property type="entry name" value="4FE4S_FER_2"/>
    <property type="match status" value="2"/>
</dbReference>
<protein>
    <recommendedName>
        <fullName>F(420)H(2) dehydrogenase subunit F</fullName>
        <ecNumber evidence="4">1.5.7.2</ecNumber>
        <ecNumber evidence="5">1.5.98.3</ecNumber>
    </recommendedName>
    <alternativeName>
        <fullName>Coenzyme F420 oxidoreductase (ferredoxin)</fullName>
    </alternativeName>
    <alternativeName>
        <fullName>F(420)H(2)-dependent phenazine dehydrogenase subunit F</fullName>
    </alternativeName>
    <alternativeName>
        <fullName>F(420)H(2)-dependent phenazine oxidoreductase subunit F</fullName>
        <shortName>FPO subunit F</shortName>
    </alternativeName>
    <alternativeName>
        <fullName>Methanophenazine hydrogenase subunit F</fullName>
    </alternativeName>
    <alternativeName>
        <fullName>Methanosarcina-phenazine hydrogenase subunit F</fullName>
    </alternativeName>
</protein>